<keyword id="KW-0064">Aspartyl protease</keyword>
<keyword id="KW-0997">Cell inner membrane</keyword>
<keyword id="KW-1003">Cell membrane</keyword>
<keyword id="KW-0378">Hydrolase</keyword>
<keyword id="KW-0472">Membrane</keyword>
<keyword id="KW-0645">Protease</keyword>
<keyword id="KW-1185">Reference proteome</keyword>
<keyword id="KW-0812">Transmembrane</keyword>
<keyword id="KW-1133">Transmembrane helix</keyword>
<protein>
    <recommendedName>
        <fullName evidence="1">Lipoprotein signal peptidase</fullName>
        <ecNumber evidence="1">3.4.23.36</ecNumber>
    </recommendedName>
    <alternativeName>
        <fullName evidence="1">Prolipoprotein signal peptidase</fullName>
    </alternativeName>
    <alternativeName>
        <fullName evidence="1">Signal peptidase II</fullName>
        <shortName evidence="1">SPase II</shortName>
    </alternativeName>
</protein>
<dbReference type="EC" id="3.4.23.36" evidence="1"/>
<dbReference type="EMBL" id="AE016828">
    <property type="protein sequence ID" value="AAO89950.2"/>
    <property type="status" value="ALT_INIT"/>
    <property type="molecule type" value="Genomic_DNA"/>
</dbReference>
<dbReference type="RefSeq" id="NP_819436.2">
    <property type="nucleotide sequence ID" value="NC_002971.3"/>
</dbReference>
<dbReference type="RefSeq" id="WP_010957550.1">
    <property type="nucleotide sequence ID" value="NC_002971.4"/>
</dbReference>
<dbReference type="SMR" id="Q83EC8"/>
<dbReference type="STRING" id="227377.CBU_0397"/>
<dbReference type="EnsemblBacteria" id="AAO89950">
    <property type="protein sequence ID" value="AAO89950"/>
    <property type="gene ID" value="CBU_0397"/>
</dbReference>
<dbReference type="GeneID" id="1208280"/>
<dbReference type="KEGG" id="cbu:CBU_0397"/>
<dbReference type="PATRIC" id="fig|227377.7.peg.391"/>
<dbReference type="eggNOG" id="COG0597">
    <property type="taxonomic scope" value="Bacteria"/>
</dbReference>
<dbReference type="HOGENOM" id="CLU_083252_4_0_6"/>
<dbReference type="OrthoDB" id="9810259at2"/>
<dbReference type="UniPathway" id="UPA00665"/>
<dbReference type="Proteomes" id="UP000002671">
    <property type="component" value="Chromosome"/>
</dbReference>
<dbReference type="GO" id="GO:0005886">
    <property type="term" value="C:plasma membrane"/>
    <property type="evidence" value="ECO:0000318"/>
    <property type="project" value="GO_Central"/>
</dbReference>
<dbReference type="GO" id="GO:0004190">
    <property type="term" value="F:aspartic-type endopeptidase activity"/>
    <property type="evidence" value="ECO:0007669"/>
    <property type="project" value="UniProtKB-UniRule"/>
</dbReference>
<dbReference type="GO" id="GO:0004175">
    <property type="term" value="F:endopeptidase activity"/>
    <property type="evidence" value="ECO:0000318"/>
    <property type="project" value="GO_Central"/>
</dbReference>
<dbReference type="GO" id="GO:0006508">
    <property type="term" value="P:proteolysis"/>
    <property type="evidence" value="ECO:0007669"/>
    <property type="project" value="UniProtKB-KW"/>
</dbReference>
<dbReference type="HAMAP" id="MF_00161">
    <property type="entry name" value="LspA"/>
    <property type="match status" value="1"/>
</dbReference>
<dbReference type="InterPro" id="IPR001872">
    <property type="entry name" value="Peptidase_A8"/>
</dbReference>
<dbReference type="NCBIfam" id="TIGR00077">
    <property type="entry name" value="lspA"/>
    <property type="match status" value="1"/>
</dbReference>
<dbReference type="PANTHER" id="PTHR33695">
    <property type="entry name" value="LIPOPROTEIN SIGNAL PEPTIDASE"/>
    <property type="match status" value="1"/>
</dbReference>
<dbReference type="PANTHER" id="PTHR33695:SF1">
    <property type="entry name" value="LIPOPROTEIN SIGNAL PEPTIDASE"/>
    <property type="match status" value="1"/>
</dbReference>
<dbReference type="Pfam" id="PF01252">
    <property type="entry name" value="Peptidase_A8"/>
    <property type="match status" value="1"/>
</dbReference>
<dbReference type="PRINTS" id="PR00781">
    <property type="entry name" value="LIPOSIGPTASE"/>
</dbReference>
<dbReference type="PROSITE" id="PS00855">
    <property type="entry name" value="SPASE_II"/>
    <property type="match status" value="1"/>
</dbReference>
<sequence length="163" mass="18575">MVTKKSKKAWPWLWFSVLVILLDQLSKYLANHFLSLGHPVKILPFLNFTLNYNTGAAFSFLGTENGWQIIFFAAISFVVSIFLILWLSRTSRSEIMMLLGLSLIIGGALGNFIDRLRWSYVTDFIDFHIKDWHFATFNVADSAICVGVFLLIVHMLLTPSSKP</sequence>
<reference key="1">
    <citation type="journal article" date="2003" name="Proc. Natl. Acad. Sci. U.S.A.">
        <title>Complete genome sequence of the Q-fever pathogen, Coxiella burnetii.</title>
        <authorList>
            <person name="Seshadri R."/>
            <person name="Paulsen I.T."/>
            <person name="Eisen J.A."/>
            <person name="Read T.D."/>
            <person name="Nelson K.E."/>
            <person name="Nelson W.C."/>
            <person name="Ward N.L."/>
            <person name="Tettelin H."/>
            <person name="Davidsen T.M."/>
            <person name="Beanan M.J."/>
            <person name="DeBoy R.T."/>
            <person name="Daugherty S.C."/>
            <person name="Brinkac L.M."/>
            <person name="Madupu R."/>
            <person name="Dodson R.J."/>
            <person name="Khouri H.M."/>
            <person name="Lee K.H."/>
            <person name="Carty H.A."/>
            <person name="Scanlan D."/>
            <person name="Heinzen R.A."/>
            <person name="Thompson H.A."/>
            <person name="Samuel J.E."/>
            <person name="Fraser C.M."/>
            <person name="Heidelberg J.F."/>
        </authorList>
    </citation>
    <scope>NUCLEOTIDE SEQUENCE [LARGE SCALE GENOMIC DNA]</scope>
    <source>
        <strain>RSA 493 / Nine Mile phase I</strain>
    </source>
</reference>
<evidence type="ECO:0000255" key="1">
    <source>
        <dbReference type="HAMAP-Rule" id="MF_00161"/>
    </source>
</evidence>
<evidence type="ECO:0000305" key="2"/>
<accession>Q83EC8</accession>
<gene>
    <name evidence="1" type="primary">lspA</name>
    <name type="ordered locus">CBU_0397</name>
</gene>
<comment type="function">
    <text evidence="1">This protein specifically catalyzes the removal of signal peptides from prolipoproteins.</text>
</comment>
<comment type="catalytic activity">
    <reaction evidence="1">
        <text>Release of signal peptides from bacterial membrane prolipoproteins. Hydrolyzes -Xaa-Yaa-Zaa-|-(S,diacylglyceryl)Cys-, in which Xaa is hydrophobic (preferably Leu), and Yaa (Ala or Ser) and Zaa (Gly or Ala) have small, neutral side chains.</text>
        <dbReference type="EC" id="3.4.23.36"/>
    </reaction>
</comment>
<comment type="pathway">
    <text evidence="1">Protein modification; lipoprotein biosynthesis (signal peptide cleavage).</text>
</comment>
<comment type="subcellular location">
    <subcellularLocation>
        <location evidence="1">Cell inner membrane</location>
        <topology evidence="1">Multi-pass membrane protein</topology>
    </subcellularLocation>
</comment>
<comment type="similarity">
    <text evidence="1">Belongs to the peptidase A8 family.</text>
</comment>
<comment type="sequence caution" evidence="2">
    <conflict type="erroneous initiation">
        <sequence resource="EMBL-CDS" id="AAO89950"/>
    </conflict>
</comment>
<name>LSPA_COXBU</name>
<feature type="chain" id="PRO_0000289372" description="Lipoprotein signal peptidase">
    <location>
        <begin position="1"/>
        <end position="163"/>
    </location>
</feature>
<feature type="transmembrane region" description="Helical" evidence="1">
    <location>
        <begin position="9"/>
        <end position="29"/>
    </location>
</feature>
<feature type="transmembrane region" description="Helical" evidence="1">
    <location>
        <begin position="42"/>
        <end position="62"/>
    </location>
</feature>
<feature type="transmembrane region" description="Helical" evidence="1">
    <location>
        <begin position="67"/>
        <end position="87"/>
    </location>
</feature>
<feature type="transmembrane region" description="Helical" evidence="1">
    <location>
        <begin position="93"/>
        <end position="113"/>
    </location>
</feature>
<feature type="transmembrane region" description="Helical" evidence="1">
    <location>
        <begin position="137"/>
        <end position="157"/>
    </location>
</feature>
<feature type="active site" evidence="1">
    <location>
        <position position="123"/>
    </location>
</feature>
<feature type="active site" evidence="1">
    <location>
        <position position="141"/>
    </location>
</feature>
<proteinExistence type="inferred from homology"/>
<organism>
    <name type="scientific">Coxiella burnetii (strain RSA 493 / Nine Mile phase I)</name>
    <dbReference type="NCBI Taxonomy" id="227377"/>
    <lineage>
        <taxon>Bacteria</taxon>
        <taxon>Pseudomonadati</taxon>
        <taxon>Pseudomonadota</taxon>
        <taxon>Gammaproteobacteria</taxon>
        <taxon>Legionellales</taxon>
        <taxon>Coxiellaceae</taxon>
        <taxon>Coxiella</taxon>
    </lineage>
</organism>